<reference key="1">
    <citation type="journal article" date="2007" name="Genome Res.">
        <title>Reductive evolution and niche adaptation inferred from the genome of Mycobacterium ulcerans, the causative agent of Buruli ulcer.</title>
        <authorList>
            <person name="Stinear T.P."/>
            <person name="Seemann T."/>
            <person name="Pidot S."/>
            <person name="Frigui W."/>
            <person name="Reysset G."/>
            <person name="Garnier T."/>
            <person name="Meurice G."/>
            <person name="Simon D."/>
            <person name="Bouchier C."/>
            <person name="Ma L."/>
            <person name="Tichit M."/>
            <person name="Porter J.L."/>
            <person name="Ryan J."/>
            <person name="Johnson P.D.R."/>
            <person name="Davies J.K."/>
            <person name="Jenkin G.A."/>
            <person name="Small P.L.C."/>
            <person name="Jones L.M."/>
            <person name="Tekaia F."/>
            <person name="Laval F."/>
            <person name="Daffe M."/>
            <person name="Parkhill J."/>
            <person name="Cole S.T."/>
        </authorList>
    </citation>
    <scope>NUCLEOTIDE SEQUENCE [LARGE SCALE GENOMIC DNA]</scope>
    <source>
        <strain>Agy99</strain>
    </source>
</reference>
<protein>
    <recommendedName>
        <fullName evidence="1">ATP synthase subunit c</fullName>
    </recommendedName>
    <alternativeName>
        <fullName evidence="1">ATP synthase F(0) sector subunit c</fullName>
    </alternativeName>
    <alternativeName>
        <fullName evidence="1">F-type ATPase subunit c</fullName>
        <shortName evidence="1">F-ATPase subunit c</shortName>
    </alternativeName>
    <alternativeName>
        <fullName evidence="1">Lipid-binding protein</fullName>
    </alternativeName>
</protein>
<evidence type="ECO:0000255" key="1">
    <source>
        <dbReference type="HAMAP-Rule" id="MF_01396"/>
    </source>
</evidence>
<accession>A0PUK5</accession>
<gene>
    <name evidence="1" type="primary">atpE</name>
    <name type="ordered locus">MUL_3959</name>
</gene>
<comment type="function">
    <text evidence="1">F(1)F(0) ATP synthase produces ATP from ADP in the presence of a proton or sodium gradient. F-type ATPases consist of two structural domains, F(1) containing the extramembraneous catalytic core and F(0) containing the membrane proton channel, linked together by a central stalk and a peripheral stalk. During catalysis, ATP synthesis in the catalytic domain of F(1) is coupled via a rotary mechanism of the central stalk subunits to proton translocation.</text>
</comment>
<comment type="function">
    <text evidence="1">Key component of the F(0) channel; it plays a direct role in translocation across the membrane. A homomeric c-ring of between 10-14 subunits forms the central stalk rotor element with the F(1) delta and epsilon subunits.</text>
</comment>
<comment type="subunit">
    <text evidence="1">F-type ATPases have 2 components, F(1) - the catalytic core - and F(0) - the membrane proton channel. F(1) has five subunits: alpha(3), beta(3), gamma(1), delta(1), epsilon(1). F(0) has three main subunits: a(1), b(2) and c(10-14). The alpha and beta chains form an alternating ring which encloses part of the gamma chain. F(1) is attached to F(0) by a central stalk formed by the gamma and epsilon chains, while a peripheral stalk is formed by the delta and b chains.</text>
</comment>
<comment type="subcellular location">
    <subcellularLocation>
        <location evidence="1">Cell membrane</location>
        <topology evidence="1">Multi-pass membrane protein</topology>
    </subcellularLocation>
</comment>
<comment type="similarity">
    <text evidence="1">Belongs to the ATPase C chain family.</text>
</comment>
<name>ATPL_MYCUA</name>
<sequence>MDPTIAAGALIGGGLIMAGGAIGAGIGDGIAGNALISGVARQPEAQGRLFTPFFITVGLVEAAYFINLAFMALFVFATPVK</sequence>
<proteinExistence type="inferred from homology"/>
<organism>
    <name type="scientific">Mycobacterium ulcerans (strain Agy99)</name>
    <dbReference type="NCBI Taxonomy" id="362242"/>
    <lineage>
        <taxon>Bacteria</taxon>
        <taxon>Bacillati</taxon>
        <taxon>Actinomycetota</taxon>
        <taxon>Actinomycetes</taxon>
        <taxon>Mycobacteriales</taxon>
        <taxon>Mycobacteriaceae</taxon>
        <taxon>Mycobacterium</taxon>
        <taxon>Mycobacterium ulcerans group</taxon>
    </lineage>
</organism>
<dbReference type="EMBL" id="CP000325">
    <property type="protein sequence ID" value="ABL06024.1"/>
    <property type="molecule type" value="Genomic_DNA"/>
</dbReference>
<dbReference type="RefSeq" id="WP_011741629.1">
    <property type="nucleotide sequence ID" value="NC_008611.1"/>
</dbReference>
<dbReference type="SMR" id="A0PUK5"/>
<dbReference type="KEGG" id="mul:MUL_3959"/>
<dbReference type="eggNOG" id="COG0636">
    <property type="taxonomic scope" value="Bacteria"/>
</dbReference>
<dbReference type="HOGENOM" id="CLU_148047_1_2_11"/>
<dbReference type="Proteomes" id="UP000000765">
    <property type="component" value="Chromosome"/>
</dbReference>
<dbReference type="GO" id="GO:0005886">
    <property type="term" value="C:plasma membrane"/>
    <property type="evidence" value="ECO:0007669"/>
    <property type="project" value="UniProtKB-SubCell"/>
</dbReference>
<dbReference type="GO" id="GO:0045259">
    <property type="term" value="C:proton-transporting ATP synthase complex"/>
    <property type="evidence" value="ECO:0007669"/>
    <property type="project" value="UniProtKB-KW"/>
</dbReference>
<dbReference type="GO" id="GO:0033177">
    <property type="term" value="C:proton-transporting two-sector ATPase complex, proton-transporting domain"/>
    <property type="evidence" value="ECO:0007669"/>
    <property type="project" value="InterPro"/>
</dbReference>
<dbReference type="GO" id="GO:0008289">
    <property type="term" value="F:lipid binding"/>
    <property type="evidence" value="ECO:0007669"/>
    <property type="project" value="UniProtKB-KW"/>
</dbReference>
<dbReference type="GO" id="GO:0046933">
    <property type="term" value="F:proton-transporting ATP synthase activity, rotational mechanism"/>
    <property type="evidence" value="ECO:0007669"/>
    <property type="project" value="UniProtKB-UniRule"/>
</dbReference>
<dbReference type="FunFam" id="1.20.20.10:FF:000010">
    <property type="entry name" value="ATP synthase subunit c"/>
    <property type="match status" value="1"/>
</dbReference>
<dbReference type="Gene3D" id="1.20.20.10">
    <property type="entry name" value="F1F0 ATP synthase subunit C"/>
    <property type="match status" value="1"/>
</dbReference>
<dbReference type="HAMAP" id="MF_01396">
    <property type="entry name" value="ATP_synth_c_bact"/>
    <property type="match status" value="1"/>
</dbReference>
<dbReference type="InterPro" id="IPR005953">
    <property type="entry name" value="ATP_synth_csu_bac/chlpt"/>
</dbReference>
<dbReference type="InterPro" id="IPR000454">
    <property type="entry name" value="ATP_synth_F0_csu"/>
</dbReference>
<dbReference type="InterPro" id="IPR020537">
    <property type="entry name" value="ATP_synth_F0_csu_DDCD_BS"/>
</dbReference>
<dbReference type="InterPro" id="IPR038662">
    <property type="entry name" value="ATP_synth_F0_csu_sf"/>
</dbReference>
<dbReference type="InterPro" id="IPR002379">
    <property type="entry name" value="ATPase_proteolipid_c-like_dom"/>
</dbReference>
<dbReference type="InterPro" id="IPR035921">
    <property type="entry name" value="F/V-ATP_Csub_sf"/>
</dbReference>
<dbReference type="NCBIfam" id="TIGR01260">
    <property type="entry name" value="ATP_synt_c"/>
    <property type="match status" value="1"/>
</dbReference>
<dbReference type="NCBIfam" id="NF004532">
    <property type="entry name" value="PRK05880.1"/>
    <property type="match status" value="1"/>
</dbReference>
<dbReference type="Pfam" id="PF00137">
    <property type="entry name" value="ATP-synt_C"/>
    <property type="match status" value="1"/>
</dbReference>
<dbReference type="PRINTS" id="PR00124">
    <property type="entry name" value="ATPASEC"/>
</dbReference>
<dbReference type="SUPFAM" id="SSF81333">
    <property type="entry name" value="F1F0 ATP synthase subunit C"/>
    <property type="match status" value="1"/>
</dbReference>
<dbReference type="PROSITE" id="PS00605">
    <property type="entry name" value="ATPASE_C"/>
    <property type="match status" value="1"/>
</dbReference>
<feature type="chain" id="PRO_1000184422" description="ATP synthase subunit c">
    <location>
        <begin position="1"/>
        <end position="81"/>
    </location>
</feature>
<feature type="transmembrane region" description="Helical" evidence="1">
    <location>
        <begin position="5"/>
        <end position="25"/>
    </location>
</feature>
<feature type="transmembrane region" description="Helical" evidence="1">
    <location>
        <begin position="57"/>
        <end position="77"/>
    </location>
</feature>
<feature type="site" description="Reversibly protonated during proton transport" evidence="1">
    <location>
        <position position="61"/>
    </location>
</feature>
<keyword id="KW-0066">ATP synthesis</keyword>
<keyword id="KW-1003">Cell membrane</keyword>
<keyword id="KW-0138">CF(0)</keyword>
<keyword id="KW-0375">Hydrogen ion transport</keyword>
<keyword id="KW-0406">Ion transport</keyword>
<keyword id="KW-0446">Lipid-binding</keyword>
<keyword id="KW-0472">Membrane</keyword>
<keyword id="KW-0812">Transmembrane</keyword>
<keyword id="KW-1133">Transmembrane helix</keyword>
<keyword id="KW-0813">Transport</keyword>